<comment type="function">
    <text evidence="1">Catalyzes the hydrolysis of glutamine to glutamate and ammonia as part of the biosynthesis of pyridoxal 5'-phosphate. The resulting ammonia molecule is channeled to the active site of PdxS.</text>
</comment>
<comment type="catalytic activity">
    <reaction evidence="1">
        <text>aldehydo-D-ribose 5-phosphate + D-glyceraldehyde 3-phosphate + L-glutamine = pyridoxal 5'-phosphate + L-glutamate + phosphate + 3 H2O + H(+)</text>
        <dbReference type="Rhea" id="RHEA:31507"/>
        <dbReference type="ChEBI" id="CHEBI:15377"/>
        <dbReference type="ChEBI" id="CHEBI:15378"/>
        <dbReference type="ChEBI" id="CHEBI:29985"/>
        <dbReference type="ChEBI" id="CHEBI:43474"/>
        <dbReference type="ChEBI" id="CHEBI:58273"/>
        <dbReference type="ChEBI" id="CHEBI:58359"/>
        <dbReference type="ChEBI" id="CHEBI:59776"/>
        <dbReference type="ChEBI" id="CHEBI:597326"/>
        <dbReference type="EC" id="4.3.3.6"/>
    </reaction>
</comment>
<comment type="catalytic activity">
    <reaction evidence="1">
        <text>L-glutamine + H2O = L-glutamate + NH4(+)</text>
        <dbReference type="Rhea" id="RHEA:15889"/>
        <dbReference type="ChEBI" id="CHEBI:15377"/>
        <dbReference type="ChEBI" id="CHEBI:28938"/>
        <dbReference type="ChEBI" id="CHEBI:29985"/>
        <dbReference type="ChEBI" id="CHEBI:58359"/>
        <dbReference type="EC" id="3.5.1.2"/>
    </reaction>
</comment>
<comment type="pathway">
    <text evidence="1">Cofactor biosynthesis; pyridoxal 5'-phosphate biosynthesis.</text>
</comment>
<comment type="subunit">
    <text evidence="1">In the presence of PdxS, forms a dodecamer of heterodimers. Only shows activity in the heterodimer.</text>
</comment>
<comment type="similarity">
    <text evidence="1">Belongs to the glutaminase PdxT/SNO family.</text>
</comment>
<keyword id="KW-0315">Glutamine amidotransferase</keyword>
<keyword id="KW-0378">Hydrolase</keyword>
<keyword id="KW-0456">Lyase</keyword>
<keyword id="KW-0663">Pyridoxal phosphate</keyword>
<feature type="chain" id="PRO_0000255839" description="Pyridoxal 5'-phosphate synthase subunit PdxT">
    <location>
        <begin position="1"/>
        <end position="186"/>
    </location>
</feature>
<feature type="active site" description="Nucleophile" evidence="1">
    <location>
        <position position="75"/>
    </location>
</feature>
<feature type="active site" description="Charge relay system" evidence="1">
    <location>
        <position position="165"/>
    </location>
</feature>
<feature type="active site" description="Charge relay system" evidence="1">
    <location>
        <position position="167"/>
    </location>
</feature>
<feature type="binding site" evidence="1">
    <location>
        <begin position="46"/>
        <end position="48"/>
    </location>
    <ligand>
        <name>L-glutamine</name>
        <dbReference type="ChEBI" id="CHEBI:58359"/>
    </ligand>
</feature>
<feature type="binding site" evidence="1">
    <location>
        <position position="101"/>
    </location>
    <ligand>
        <name>L-glutamine</name>
        <dbReference type="ChEBI" id="CHEBI:58359"/>
    </ligand>
</feature>
<feature type="binding site" evidence="1">
    <location>
        <begin position="129"/>
        <end position="130"/>
    </location>
    <ligand>
        <name>L-glutamine</name>
        <dbReference type="ChEBI" id="CHEBI:58359"/>
    </ligand>
</feature>
<accession>Q2FJC0</accession>
<proteinExistence type="inferred from homology"/>
<name>PDXT_STAA3</name>
<dbReference type="EC" id="4.3.3.6" evidence="1"/>
<dbReference type="EC" id="3.5.1.2" evidence="1"/>
<dbReference type="EMBL" id="CP000255">
    <property type="protein sequence ID" value="ABD20829.1"/>
    <property type="molecule type" value="Genomic_DNA"/>
</dbReference>
<dbReference type="RefSeq" id="WP_000690439.1">
    <property type="nucleotide sequence ID" value="NZ_CP027476.1"/>
</dbReference>
<dbReference type="SMR" id="Q2FJC0"/>
<dbReference type="MEROPS" id="C26.A32"/>
<dbReference type="KEGG" id="saa:SAUSA300_0505"/>
<dbReference type="HOGENOM" id="CLU_069674_2_0_9"/>
<dbReference type="OMA" id="GMIMLAD"/>
<dbReference type="UniPathway" id="UPA00245"/>
<dbReference type="Proteomes" id="UP000001939">
    <property type="component" value="Chromosome"/>
</dbReference>
<dbReference type="GO" id="GO:0005829">
    <property type="term" value="C:cytosol"/>
    <property type="evidence" value="ECO:0007669"/>
    <property type="project" value="TreeGrafter"/>
</dbReference>
<dbReference type="GO" id="GO:1903600">
    <property type="term" value="C:glutaminase complex"/>
    <property type="evidence" value="ECO:0007669"/>
    <property type="project" value="TreeGrafter"/>
</dbReference>
<dbReference type="GO" id="GO:0004359">
    <property type="term" value="F:glutaminase activity"/>
    <property type="evidence" value="ECO:0007669"/>
    <property type="project" value="UniProtKB-UniRule"/>
</dbReference>
<dbReference type="GO" id="GO:0036381">
    <property type="term" value="F:pyridoxal 5'-phosphate synthase (glutamine hydrolysing) activity"/>
    <property type="evidence" value="ECO:0007669"/>
    <property type="project" value="UniProtKB-UniRule"/>
</dbReference>
<dbReference type="GO" id="GO:0006543">
    <property type="term" value="P:glutamine catabolic process"/>
    <property type="evidence" value="ECO:0007669"/>
    <property type="project" value="UniProtKB-UniRule"/>
</dbReference>
<dbReference type="GO" id="GO:0042823">
    <property type="term" value="P:pyridoxal phosphate biosynthetic process"/>
    <property type="evidence" value="ECO:0007669"/>
    <property type="project" value="UniProtKB-UniRule"/>
</dbReference>
<dbReference type="GO" id="GO:0008614">
    <property type="term" value="P:pyridoxine metabolic process"/>
    <property type="evidence" value="ECO:0007669"/>
    <property type="project" value="TreeGrafter"/>
</dbReference>
<dbReference type="CDD" id="cd01749">
    <property type="entry name" value="GATase1_PB"/>
    <property type="match status" value="1"/>
</dbReference>
<dbReference type="FunFam" id="3.40.50.880:FF:000010">
    <property type="entry name" value="uncharacterized protein LOC100176842 isoform X2"/>
    <property type="match status" value="1"/>
</dbReference>
<dbReference type="Gene3D" id="3.40.50.880">
    <property type="match status" value="1"/>
</dbReference>
<dbReference type="HAMAP" id="MF_01615">
    <property type="entry name" value="PdxT"/>
    <property type="match status" value="1"/>
</dbReference>
<dbReference type="InterPro" id="IPR029062">
    <property type="entry name" value="Class_I_gatase-like"/>
</dbReference>
<dbReference type="InterPro" id="IPR002161">
    <property type="entry name" value="PdxT/SNO"/>
</dbReference>
<dbReference type="InterPro" id="IPR021196">
    <property type="entry name" value="PdxT/SNO_CS"/>
</dbReference>
<dbReference type="NCBIfam" id="TIGR03800">
    <property type="entry name" value="PLP_synth_Pdx2"/>
    <property type="match status" value="1"/>
</dbReference>
<dbReference type="PANTHER" id="PTHR31559">
    <property type="entry name" value="PYRIDOXAL 5'-PHOSPHATE SYNTHASE SUBUNIT SNO"/>
    <property type="match status" value="1"/>
</dbReference>
<dbReference type="PANTHER" id="PTHR31559:SF0">
    <property type="entry name" value="PYRIDOXAL 5'-PHOSPHATE SYNTHASE SUBUNIT SNO1-RELATED"/>
    <property type="match status" value="1"/>
</dbReference>
<dbReference type="Pfam" id="PF01174">
    <property type="entry name" value="SNO"/>
    <property type="match status" value="1"/>
</dbReference>
<dbReference type="PIRSF" id="PIRSF005639">
    <property type="entry name" value="Glut_amidoT_SNO"/>
    <property type="match status" value="1"/>
</dbReference>
<dbReference type="SUPFAM" id="SSF52317">
    <property type="entry name" value="Class I glutamine amidotransferase-like"/>
    <property type="match status" value="1"/>
</dbReference>
<dbReference type="PROSITE" id="PS01236">
    <property type="entry name" value="PDXT_SNO_1"/>
    <property type="match status" value="1"/>
</dbReference>
<dbReference type="PROSITE" id="PS51130">
    <property type="entry name" value="PDXT_SNO_2"/>
    <property type="match status" value="1"/>
</dbReference>
<evidence type="ECO:0000255" key="1">
    <source>
        <dbReference type="HAMAP-Rule" id="MF_01615"/>
    </source>
</evidence>
<reference key="1">
    <citation type="journal article" date="2006" name="Lancet">
        <title>Complete genome sequence of USA300, an epidemic clone of community-acquired meticillin-resistant Staphylococcus aureus.</title>
        <authorList>
            <person name="Diep B.A."/>
            <person name="Gill S.R."/>
            <person name="Chang R.F."/>
            <person name="Phan T.H."/>
            <person name="Chen J.H."/>
            <person name="Davidson M.G."/>
            <person name="Lin F."/>
            <person name="Lin J."/>
            <person name="Carleton H.A."/>
            <person name="Mongodin E.F."/>
            <person name="Sensabaugh G.F."/>
            <person name="Perdreau-Remington F."/>
        </authorList>
    </citation>
    <scope>NUCLEOTIDE SEQUENCE [LARGE SCALE GENOMIC DNA]</scope>
    <source>
        <strain>USA300</strain>
    </source>
</reference>
<sequence>MKIGVLALQGAVREHIRHIELSGHEGIAVKKVEQLEEIEGLILPGGESTTLRRLMNLYGFKEALQNSTLPMFGTCAGLIVLAQDIVGEEGYLNKLNITVQRNSFGRQVDSFETELDIKGIATDIEGVFIRAPHIEKVGQGVDILCKVNEKIVAVQQGKYLGVSFHPELTDDYRVTDYFINHIVKKA</sequence>
<organism>
    <name type="scientific">Staphylococcus aureus (strain USA300)</name>
    <dbReference type="NCBI Taxonomy" id="367830"/>
    <lineage>
        <taxon>Bacteria</taxon>
        <taxon>Bacillati</taxon>
        <taxon>Bacillota</taxon>
        <taxon>Bacilli</taxon>
        <taxon>Bacillales</taxon>
        <taxon>Staphylococcaceae</taxon>
        <taxon>Staphylococcus</taxon>
    </lineage>
</organism>
<gene>
    <name evidence="1" type="primary">pdxT</name>
    <name type="ordered locus">SAUSA300_0505</name>
</gene>
<protein>
    <recommendedName>
        <fullName evidence="1">Pyridoxal 5'-phosphate synthase subunit PdxT</fullName>
        <ecNumber evidence="1">4.3.3.6</ecNumber>
    </recommendedName>
    <alternativeName>
        <fullName evidence="1">Pdx2</fullName>
    </alternativeName>
    <alternativeName>
        <fullName evidence="1">Pyridoxal 5'-phosphate synthase glutaminase subunit</fullName>
        <ecNumber evidence="1">3.5.1.2</ecNumber>
    </alternativeName>
</protein>